<reference key="1">
    <citation type="journal article" date="2002" name="Proc. Natl. Acad. Sci. U.S.A.">
        <title>Extensive mosaic structure revealed by the complete genome sequence of uropathogenic Escherichia coli.</title>
        <authorList>
            <person name="Welch R.A."/>
            <person name="Burland V."/>
            <person name="Plunkett G. III"/>
            <person name="Redford P."/>
            <person name="Roesch P."/>
            <person name="Rasko D."/>
            <person name="Buckles E.L."/>
            <person name="Liou S.-R."/>
            <person name="Boutin A."/>
            <person name="Hackett J."/>
            <person name="Stroud D."/>
            <person name="Mayhew G.F."/>
            <person name="Rose D.J."/>
            <person name="Zhou S."/>
            <person name="Schwartz D.C."/>
            <person name="Perna N.T."/>
            <person name="Mobley H.L.T."/>
            <person name="Donnenberg M.S."/>
            <person name="Blattner F.R."/>
        </authorList>
    </citation>
    <scope>NUCLEOTIDE SEQUENCE [LARGE SCALE GENOMIC DNA]</scope>
    <source>
        <strain>CFT073 / ATCC 700928 / UPEC</strain>
    </source>
</reference>
<gene>
    <name type="primary">gntR</name>
    <name type="ordered locus">c4227</name>
</gene>
<comment type="function">
    <text evidence="1">Negative regulator for the gluconate utilization system GNT-I, the gntUKR operon.</text>
</comment>
<comment type="pathway">
    <text>Carbohydrate acid metabolism; D-gluconate degradation [regulation].</text>
</comment>
<dbReference type="EMBL" id="AE014075">
    <property type="protein sequence ID" value="AAN82665.1"/>
    <property type="molecule type" value="Genomic_DNA"/>
</dbReference>
<dbReference type="RefSeq" id="WP_000730252.1">
    <property type="nucleotide sequence ID" value="NZ_CP051263.1"/>
</dbReference>
<dbReference type="SMR" id="P0ACP6"/>
<dbReference type="STRING" id="199310.c4227"/>
<dbReference type="GeneID" id="75059978"/>
<dbReference type="KEGG" id="ecc:c4227"/>
<dbReference type="eggNOG" id="COG1609">
    <property type="taxonomic scope" value="Bacteria"/>
</dbReference>
<dbReference type="HOGENOM" id="CLU_037628_6_3_6"/>
<dbReference type="BioCyc" id="ECOL199310:C4227-MONOMER"/>
<dbReference type="UniPathway" id="UPA00792"/>
<dbReference type="Proteomes" id="UP000001410">
    <property type="component" value="Chromosome"/>
</dbReference>
<dbReference type="GO" id="GO:0003700">
    <property type="term" value="F:DNA-binding transcription factor activity"/>
    <property type="evidence" value="ECO:0007669"/>
    <property type="project" value="TreeGrafter"/>
</dbReference>
<dbReference type="GO" id="GO:0000976">
    <property type="term" value="F:transcription cis-regulatory region binding"/>
    <property type="evidence" value="ECO:0007669"/>
    <property type="project" value="TreeGrafter"/>
</dbReference>
<dbReference type="CDD" id="cd01392">
    <property type="entry name" value="HTH_LacI"/>
    <property type="match status" value="1"/>
</dbReference>
<dbReference type="CDD" id="cd01575">
    <property type="entry name" value="PBP1_GntR"/>
    <property type="match status" value="1"/>
</dbReference>
<dbReference type="FunFam" id="1.10.260.40:FF:000012">
    <property type="entry name" value="HTH-type transcriptional regulator GntR"/>
    <property type="match status" value="1"/>
</dbReference>
<dbReference type="FunFam" id="3.40.50.2300:FF:000064">
    <property type="entry name" value="HTH-type transcriptional regulator GntR"/>
    <property type="match status" value="1"/>
</dbReference>
<dbReference type="Gene3D" id="3.40.50.2300">
    <property type="match status" value="2"/>
</dbReference>
<dbReference type="Gene3D" id="1.10.260.40">
    <property type="entry name" value="lambda repressor-like DNA-binding domains"/>
    <property type="match status" value="1"/>
</dbReference>
<dbReference type="InterPro" id="IPR001387">
    <property type="entry name" value="Cro/C1-type_HTH"/>
</dbReference>
<dbReference type="InterPro" id="IPR000843">
    <property type="entry name" value="HTH_LacI"/>
</dbReference>
<dbReference type="InterPro" id="IPR010982">
    <property type="entry name" value="Lambda_DNA-bd_dom_sf"/>
</dbReference>
<dbReference type="InterPro" id="IPR001761">
    <property type="entry name" value="Peripla_BP/Lac1_sug-bd_dom"/>
</dbReference>
<dbReference type="InterPro" id="IPR028082">
    <property type="entry name" value="Peripla_BP_I"/>
</dbReference>
<dbReference type="NCBIfam" id="NF011563">
    <property type="entry name" value="PRK14987.1"/>
    <property type="match status" value="1"/>
</dbReference>
<dbReference type="PANTHER" id="PTHR30146:SF2">
    <property type="entry name" value="HTH-TYPE TRANSCRIPTIONAL REGULATOR GNTR"/>
    <property type="match status" value="1"/>
</dbReference>
<dbReference type="PANTHER" id="PTHR30146">
    <property type="entry name" value="LACI-RELATED TRANSCRIPTIONAL REPRESSOR"/>
    <property type="match status" value="1"/>
</dbReference>
<dbReference type="Pfam" id="PF00356">
    <property type="entry name" value="LacI"/>
    <property type="match status" value="1"/>
</dbReference>
<dbReference type="Pfam" id="PF00532">
    <property type="entry name" value="Peripla_BP_1"/>
    <property type="match status" value="1"/>
</dbReference>
<dbReference type="SMART" id="SM00354">
    <property type="entry name" value="HTH_LACI"/>
    <property type="match status" value="1"/>
</dbReference>
<dbReference type="SUPFAM" id="SSF47413">
    <property type="entry name" value="lambda repressor-like DNA-binding domains"/>
    <property type="match status" value="1"/>
</dbReference>
<dbReference type="SUPFAM" id="SSF53822">
    <property type="entry name" value="Periplasmic binding protein-like I"/>
    <property type="match status" value="1"/>
</dbReference>
<dbReference type="PROSITE" id="PS00356">
    <property type="entry name" value="HTH_LACI_1"/>
    <property type="match status" value="1"/>
</dbReference>
<dbReference type="PROSITE" id="PS50932">
    <property type="entry name" value="HTH_LACI_2"/>
    <property type="match status" value="1"/>
</dbReference>
<keyword id="KW-0238">DNA-binding</keyword>
<keyword id="KW-1185">Reference proteome</keyword>
<keyword id="KW-0678">Repressor</keyword>
<keyword id="KW-0804">Transcription</keyword>
<keyword id="KW-0805">Transcription regulation</keyword>
<accession>P0ACP6</accession>
<accession>P46860</accession>
<accession>Q47241</accession>
<organism>
    <name type="scientific">Escherichia coli O6:H1 (strain CFT073 / ATCC 700928 / UPEC)</name>
    <dbReference type="NCBI Taxonomy" id="199310"/>
    <lineage>
        <taxon>Bacteria</taxon>
        <taxon>Pseudomonadati</taxon>
        <taxon>Pseudomonadota</taxon>
        <taxon>Gammaproteobacteria</taxon>
        <taxon>Enterobacterales</taxon>
        <taxon>Enterobacteriaceae</taxon>
        <taxon>Escherichia</taxon>
    </lineage>
</organism>
<proteinExistence type="inferred from homology"/>
<name>GNTR_ECOL6</name>
<protein>
    <recommendedName>
        <fullName>HTH-type transcriptional regulator GntR</fullName>
    </recommendedName>
    <alternativeName>
        <fullName>Gluconate utilization system GNT-I transcriptional repressor</fullName>
    </alternativeName>
</protein>
<feature type="chain" id="PRO_0000107959" description="HTH-type transcriptional regulator GntR">
    <location>
        <begin position="1"/>
        <end position="331"/>
    </location>
</feature>
<feature type="domain" description="HTH lacI-type" evidence="2">
    <location>
        <begin position="6"/>
        <end position="60"/>
    </location>
</feature>
<feature type="DNA-binding region" description="H-T-H motif" evidence="2">
    <location>
        <begin position="8"/>
        <end position="27"/>
    </location>
</feature>
<sequence length="331" mass="36422">MKKKRPVLQDVADRVGVTKMTVSRFLRNPEQVSVALRGKIAAALDELGYIPNRAPDILSNATSRAIGVLLPSLTNQVFAEVLRGIESVTDAHGYQTMLAHYGYKPEMEQERLESMLSWNIDGLILTERTHTPRTLKMIEVAGIPVVELMDSKSPCLDIAVGFDNFEAARQMTTAIIARGHRHIAYLGARLDERTIIKQKGYEQAMLDAGLVPYSVMVEQSSSYSSGIELIRQARREYPQLDGVFCTNDDLAVGAAFECQRLGLKVPDDMAIAGFHGHDIGQVMEPRLASVLTPRERMGSIGAERLLARIRGESVTPKMLDLGFTLSPGGSI</sequence>
<evidence type="ECO:0000250" key="1"/>
<evidence type="ECO:0000255" key="2">
    <source>
        <dbReference type="PROSITE-ProRule" id="PRU00111"/>
    </source>
</evidence>